<name>SULA_ECOSM</name>
<gene>
    <name evidence="1" type="primary">sulA</name>
    <name type="ordered locus">EcSMS35_2162</name>
</gene>
<protein>
    <recommendedName>
        <fullName evidence="1">Cell division inhibitor SulA</fullName>
    </recommendedName>
</protein>
<dbReference type="EMBL" id="CP000970">
    <property type="protein sequence ID" value="ACB19631.1"/>
    <property type="molecule type" value="Genomic_DNA"/>
</dbReference>
<dbReference type="RefSeq" id="WP_000288710.1">
    <property type="nucleotide sequence ID" value="NC_010498.1"/>
</dbReference>
<dbReference type="SMR" id="B1LJ40"/>
<dbReference type="GeneID" id="93776456"/>
<dbReference type="KEGG" id="ecm:EcSMS35_2162"/>
<dbReference type="HOGENOM" id="CLU_118972_1_0_6"/>
<dbReference type="Proteomes" id="UP000007011">
    <property type="component" value="Chromosome"/>
</dbReference>
<dbReference type="GO" id="GO:0000917">
    <property type="term" value="P:division septum assembly"/>
    <property type="evidence" value="ECO:0007669"/>
    <property type="project" value="UniProtKB-KW"/>
</dbReference>
<dbReference type="GO" id="GO:0006281">
    <property type="term" value="P:DNA repair"/>
    <property type="evidence" value="ECO:0007669"/>
    <property type="project" value="TreeGrafter"/>
</dbReference>
<dbReference type="GO" id="GO:0051782">
    <property type="term" value="P:negative regulation of cell division"/>
    <property type="evidence" value="ECO:0007669"/>
    <property type="project" value="UniProtKB-UniRule"/>
</dbReference>
<dbReference type="GO" id="GO:0009432">
    <property type="term" value="P:SOS response"/>
    <property type="evidence" value="ECO:0007669"/>
    <property type="project" value="UniProtKB-UniRule"/>
</dbReference>
<dbReference type="FunFam" id="3.40.50.300:FF:000417">
    <property type="entry name" value="Cell division inhibitor SulA"/>
    <property type="match status" value="1"/>
</dbReference>
<dbReference type="Gene3D" id="3.40.50.300">
    <property type="entry name" value="P-loop containing nucleotide triphosphate hydrolases"/>
    <property type="match status" value="1"/>
</dbReference>
<dbReference type="HAMAP" id="MF_01179">
    <property type="entry name" value="SulA"/>
    <property type="match status" value="1"/>
</dbReference>
<dbReference type="InterPro" id="IPR004596">
    <property type="entry name" value="Cell_div_suppressor_SulA"/>
</dbReference>
<dbReference type="InterPro" id="IPR027417">
    <property type="entry name" value="P-loop_NTPase"/>
</dbReference>
<dbReference type="InterPro" id="IPR050356">
    <property type="entry name" value="SulA_CellDiv_inhibitor"/>
</dbReference>
<dbReference type="InterPro" id="IPR047696">
    <property type="entry name" value="SulA_enterobact"/>
</dbReference>
<dbReference type="NCBIfam" id="NF007892">
    <property type="entry name" value="PRK10595.1"/>
    <property type="match status" value="1"/>
</dbReference>
<dbReference type="NCBIfam" id="TIGR00623">
    <property type="entry name" value="SOS_SulA_coli"/>
    <property type="match status" value="1"/>
</dbReference>
<dbReference type="PANTHER" id="PTHR35369">
    <property type="entry name" value="BLR3025 PROTEIN-RELATED"/>
    <property type="match status" value="1"/>
</dbReference>
<dbReference type="PANTHER" id="PTHR35369:SF4">
    <property type="entry name" value="CELL DIVISION INHIBITOR SULA"/>
    <property type="match status" value="1"/>
</dbReference>
<dbReference type="Pfam" id="PF03846">
    <property type="entry name" value="SulA"/>
    <property type="match status" value="1"/>
</dbReference>
<dbReference type="PIRSF" id="PIRSF003093">
    <property type="entry name" value="SulA"/>
    <property type="match status" value="1"/>
</dbReference>
<dbReference type="SUPFAM" id="SSF52540">
    <property type="entry name" value="P-loop containing nucleoside triphosphate hydrolases"/>
    <property type="match status" value="1"/>
</dbReference>
<feature type="chain" id="PRO_0000343960" description="Cell division inhibitor SulA">
    <location>
        <begin position="1"/>
        <end position="169"/>
    </location>
</feature>
<feature type="region of interest" description="FtsZ binding" evidence="1">
    <location>
        <begin position="106"/>
        <end position="112"/>
    </location>
</feature>
<feature type="region of interest" description="Lon protease binding" evidence="1">
    <location>
        <begin position="162"/>
        <end position="169"/>
    </location>
</feature>
<feature type="site" description="Essential for degradation by Lon protease" evidence="1">
    <location>
        <position position="169"/>
    </location>
</feature>
<evidence type="ECO:0000255" key="1">
    <source>
        <dbReference type="HAMAP-Rule" id="MF_01179"/>
    </source>
</evidence>
<comment type="function">
    <text evidence="1">Component of the SOS system and an inhibitor of cell division. Accumulation of SulA causes rapid cessation of cell division and the appearance of long, non-septate filaments. In the presence of GTP, binds a polymerization-competent form of FtsZ in a 1:1 ratio, thus inhibiting FtsZ polymerization and therefore preventing it from participating in the assembly of the Z ring. This mechanism prevents the premature segregation of damaged DNA to daughter cells during cell division.</text>
</comment>
<comment type="subunit">
    <text evidence="1">Interacts with FtsZ.</text>
</comment>
<comment type="induction">
    <text evidence="1">By DNA damage, as part of the SOS response.</text>
</comment>
<comment type="PTM">
    <text evidence="1">Is rapidly cleaved and degraded by the Lon protease once DNA damage is repaired.</text>
</comment>
<comment type="similarity">
    <text evidence="1">Belongs to the SulA family.</text>
</comment>
<proteinExistence type="inferred from homology"/>
<sequence>MYTSGYAHRSSSFSSAASKIARVSTENTTAGLISEVVYREDQPMMTQLLLLPLLQQLGQQSRWQLWLTPQQKLSREWVQASGLPLTKVMQISQLSPCHTVESMVRALRTGNYSVVIGWLADDLTEEEHAELVDAANEGNAMGFIMRPVSASSHATRQLSGLKIHSNLYH</sequence>
<reference key="1">
    <citation type="journal article" date="2008" name="J. Bacteriol.">
        <title>Insights into the environmental resistance gene pool from the genome sequence of the multidrug-resistant environmental isolate Escherichia coli SMS-3-5.</title>
        <authorList>
            <person name="Fricke W.F."/>
            <person name="Wright M.S."/>
            <person name="Lindell A.H."/>
            <person name="Harkins D.M."/>
            <person name="Baker-Austin C."/>
            <person name="Ravel J."/>
            <person name="Stepanauskas R."/>
        </authorList>
    </citation>
    <scope>NUCLEOTIDE SEQUENCE [LARGE SCALE GENOMIC DNA]</scope>
    <source>
        <strain>SMS-3-5 / SECEC</strain>
    </source>
</reference>
<accession>B1LJ40</accession>
<keyword id="KW-0131">Cell cycle</keyword>
<keyword id="KW-0132">Cell division</keyword>
<keyword id="KW-0227">DNA damage</keyword>
<keyword id="KW-0717">Septation</keyword>
<keyword id="KW-0742">SOS response</keyword>
<organism>
    <name type="scientific">Escherichia coli (strain SMS-3-5 / SECEC)</name>
    <dbReference type="NCBI Taxonomy" id="439855"/>
    <lineage>
        <taxon>Bacteria</taxon>
        <taxon>Pseudomonadati</taxon>
        <taxon>Pseudomonadota</taxon>
        <taxon>Gammaproteobacteria</taxon>
        <taxon>Enterobacterales</taxon>
        <taxon>Enterobacteriaceae</taxon>
        <taxon>Escherichia</taxon>
    </lineage>
</organism>